<proteinExistence type="inferred from homology"/>
<protein>
    <recommendedName>
        <fullName evidence="1">Tol-Pal system protein TolB</fullName>
    </recommendedName>
</protein>
<reference key="1">
    <citation type="journal article" date="2007" name="Genome Biol.">
        <title>Characterization and modeling of the Haemophilus influenzae core and supragenomes based on the complete genomic sequences of Rd and 12 clinical nontypeable strains.</title>
        <authorList>
            <person name="Hogg J.S."/>
            <person name="Hu F.Z."/>
            <person name="Janto B."/>
            <person name="Boissy R."/>
            <person name="Hayes J."/>
            <person name="Keefe R."/>
            <person name="Post J.C."/>
            <person name="Ehrlich G.D."/>
        </authorList>
    </citation>
    <scope>NUCLEOTIDE SEQUENCE [LARGE SCALE GENOMIC DNA]</scope>
    <source>
        <strain>PittGG</strain>
    </source>
</reference>
<sequence length="427" mass="44992">MKLLKRLVSVFAIVLAVGSNAFAGDEVRIVIDEGVDGARPIAVVPFVGSAPEDISKIVADDLRNSGKFNPIAVSQMPQHPTSAAEVNPEAWSNIGIDAIVIGQVVPSGNGYSITYQLIDTVGASGTPGTVLMQNSYTVTNKWLRYGAHTVSDEVFEKLTAIRGAFRTRIAYVVQKNGGSQPYEVRVADYDGYNQFIVNRSAQPIMSPAWSPDGQRLAYVSFENKKSQLVVQDLNSGSRKVVASFQGHNGAPAFSPDGSRLAFASSRDGVLNIYVMGANGGTPTQLTSGAGNNTEPAWSPDGNSILFTSDRSGSPQVYRMDASGGNATAVGGRGSAQISADGKTLVMINGNNNVVKQDLTTGVSEVLSTSFLGESPSLSPNGIMIIYSSTQGLGKVLQLVSADGRFKASLPGSDGQVKFPAWSPYLTK</sequence>
<dbReference type="EMBL" id="CP000672">
    <property type="protein sequence ID" value="ABQ99956.1"/>
    <property type="molecule type" value="Genomic_DNA"/>
</dbReference>
<dbReference type="SMR" id="A5UGQ1"/>
<dbReference type="KEGG" id="hiq:CGSHiGG_05070"/>
<dbReference type="HOGENOM" id="CLU_047123_0_0_6"/>
<dbReference type="Proteomes" id="UP000001990">
    <property type="component" value="Chromosome"/>
</dbReference>
<dbReference type="GO" id="GO:0042597">
    <property type="term" value="C:periplasmic space"/>
    <property type="evidence" value="ECO:0007669"/>
    <property type="project" value="UniProtKB-SubCell"/>
</dbReference>
<dbReference type="GO" id="GO:0051301">
    <property type="term" value="P:cell division"/>
    <property type="evidence" value="ECO:0007669"/>
    <property type="project" value="UniProtKB-UniRule"/>
</dbReference>
<dbReference type="GO" id="GO:0017038">
    <property type="term" value="P:protein import"/>
    <property type="evidence" value="ECO:0007669"/>
    <property type="project" value="InterPro"/>
</dbReference>
<dbReference type="Gene3D" id="2.120.10.30">
    <property type="entry name" value="TolB, C-terminal domain"/>
    <property type="match status" value="1"/>
</dbReference>
<dbReference type="Gene3D" id="3.40.50.10070">
    <property type="entry name" value="TolB, N-terminal domain"/>
    <property type="match status" value="1"/>
</dbReference>
<dbReference type="HAMAP" id="MF_00671">
    <property type="entry name" value="TolB"/>
    <property type="match status" value="1"/>
</dbReference>
<dbReference type="InterPro" id="IPR011042">
    <property type="entry name" value="6-blade_b-propeller_TolB-like"/>
</dbReference>
<dbReference type="InterPro" id="IPR011659">
    <property type="entry name" value="PD40"/>
</dbReference>
<dbReference type="InterPro" id="IPR014167">
    <property type="entry name" value="Tol-Pal_TolB"/>
</dbReference>
<dbReference type="InterPro" id="IPR007195">
    <property type="entry name" value="TolB_N"/>
</dbReference>
<dbReference type="NCBIfam" id="TIGR02800">
    <property type="entry name" value="propeller_TolB"/>
    <property type="match status" value="1"/>
</dbReference>
<dbReference type="PANTHER" id="PTHR36842:SF1">
    <property type="entry name" value="PROTEIN TOLB"/>
    <property type="match status" value="1"/>
</dbReference>
<dbReference type="PANTHER" id="PTHR36842">
    <property type="entry name" value="PROTEIN TOLB HOMOLOG"/>
    <property type="match status" value="1"/>
</dbReference>
<dbReference type="Pfam" id="PF07676">
    <property type="entry name" value="PD40"/>
    <property type="match status" value="4"/>
</dbReference>
<dbReference type="Pfam" id="PF04052">
    <property type="entry name" value="TolB_N"/>
    <property type="match status" value="1"/>
</dbReference>
<dbReference type="SUPFAM" id="SSF52964">
    <property type="entry name" value="TolB, N-terminal domain"/>
    <property type="match status" value="1"/>
</dbReference>
<dbReference type="SUPFAM" id="SSF69304">
    <property type="entry name" value="Tricorn protease N-terminal domain"/>
    <property type="match status" value="1"/>
</dbReference>
<keyword id="KW-0131">Cell cycle</keyword>
<keyword id="KW-0132">Cell division</keyword>
<keyword id="KW-0574">Periplasm</keyword>
<keyword id="KW-0732">Signal</keyword>
<evidence type="ECO:0000255" key="1">
    <source>
        <dbReference type="HAMAP-Rule" id="MF_00671"/>
    </source>
</evidence>
<gene>
    <name evidence="1" type="primary">tolB</name>
    <name type="ordered locus">CGSHiGG_05070</name>
</gene>
<organism>
    <name type="scientific">Haemophilus influenzae (strain PittGG)</name>
    <dbReference type="NCBI Taxonomy" id="374931"/>
    <lineage>
        <taxon>Bacteria</taxon>
        <taxon>Pseudomonadati</taxon>
        <taxon>Pseudomonadota</taxon>
        <taxon>Gammaproteobacteria</taxon>
        <taxon>Pasteurellales</taxon>
        <taxon>Pasteurellaceae</taxon>
        <taxon>Haemophilus</taxon>
    </lineage>
</organism>
<feature type="signal peptide" evidence="1">
    <location>
        <begin position="1"/>
        <end position="23"/>
    </location>
</feature>
<feature type="chain" id="PRO_1000026704" description="Tol-Pal system protein TolB" evidence="1">
    <location>
        <begin position="24"/>
        <end position="427"/>
    </location>
</feature>
<name>TOLB_HAEIG</name>
<comment type="function">
    <text evidence="1">Part of the Tol-Pal system, which plays a role in outer membrane invagination during cell division and is important for maintaining outer membrane integrity.</text>
</comment>
<comment type="subunit">
    <text evidence="1">The Tol-Pal system is composed of five core proteins: the inner membrane proteins TolA, TolQ and TolR, the periplasmic protein TolB and the outer membrane protein Pal. They form a network linking the inner and outer membranes and the peptidoglycan layer.</text>
</comment>
<comment type="subcellular location">
    <subcellularLocation>
        <location evidence="1">Periplasm</location>
    </subcellularLocation>
</comment>
<comment type="similarity">
    <text evidence="1">Belongs to the TolB family.</text>
</comment>
<accession>A5UGQ1</accession>